<comment type="function">
    <text evidence="2">One of the essential components for the initiation of protein synthesis. Protects formylmethionyl-tRNA from spontaneous hydrolysis and promotes its binding to the 30S ribosomal subunits. Also involved in the hydrolysis of GTP during the formation of the 70S ribosomal complex.</text>
</comment>
<comment type="subcellular location">
    <subcellularLocation>
        <location evidence="2">Cytoplasm</location>
    </subcellularLocation>
</comment>
<comment type="similarity">
    <text evidence="2">Belongs to the TRAFAC class translation factor GTPase superfamily. Classic translation factor GTPase family. IF-2 subfamily.</text>
</comment>
<proteinExistence type="inferred from homology"/>
<reference key="1">
    <citation type="journal article" date="2007" name="PLoS ONE">
        <title>Analysis of the neurotoxin complex genes in Clostridium botulinum A1-A4 and B1 strains: BoNT/A3, /Ba4 and /B1 clusters are located within plasmids.</title>
        <authorList>
            <person name="Smith T.J."/>
            <person name="Hill K.K."/>
            <person name="Foley B.T."/>
            <person name="Detter J.C."/>
            <person name="Munk A.C."/>
            <person name="Bruce D.C."/>
            <person name="Doggett N.A."/>
            <person name="Smith L.A."/>
            <person name="Marks J.D."/>
            <person name="Xie G."/>
            <person name="Brettin T.S."/>
        </authorList>
    </citation>
    <scope>NUCLEOTIDE SEQUENCE [LARGE SCALE GENOMIC DNA]</scope>
    <source>
        <strain>Okra / Type B1</strain>
    </source>
</reference>
<name>IF2_CLOBK</name>
<protein>
    <recommendedName>
        <fullName evidence="2">Translation initiation factor IF-2</fullName>
    </recommendedName>
</protein>
<evidence type="ECO:0000250" key="1"/>
<evidence type="ECO:0000255" key="2">
    <source>
        <dbReference type="HAMAP-Rule" id="MF_00100"/>
    </source>
</evidence>
<evidence type="ECO:0000256" key="3">
    <source>
        <dbReference type="SAM" id="MobiDB-lite"/>
    </source>
</evidence>
<sequence length="688" mass="75742">MAKIRVYELAKELNISSKELITLLEEEFSVEVKNHMSAIEDEDANLIKELLSGKEKSEKTKEEDDEIETTAKNPIKESTNNKKPNKRDDKNEKVNTENAEDMAIITITSETITVKEISDKLEKSYAEVIKELMLMGVMASVNQEINFEMAEKLAAKFDTEILREDEDEEDDLEDILRDNEEEEYLQKRSPIITVMGHVDHGKTSLLDAIRKSKVTSTEAGGITQHIGAYTVELNGEAITFLDTPGHAAFTAMRARGAQVTDIVILVVAADDGIMPQTQEAISHCKAANVPLIVAINKIDRPGANIDKVKQELTEYGLVAEDWGGDTICVPVSAHTKEGIDDLLEMILLSSEILELKANPNRKAKGTVVEAKLDKGRGPVATLLIQNGTLRVGDSIVVGSTYGRIRAMFNDKGRNIKSAGPSTPVEILGLSEVPEAGDKFYQVKEEKTARSIADKRKEKIRDEYLQSTHKVSLEDLYNQIQEGTVKELGLIVKADVQGSVEALKQSLEKLSTGEVKVRVIHGGVGAINETDVTLATASNGIILGFNVRPDNNAIIASEKDGVDIKTYRVIYDAIEDIKSAMLGMLEPEFKEVVIGTAEVRQVYKISSVGTIAGAYIQTGKLARNAGARVIRDGIVIFESELASLKRFKDDAKEVAQGYECGLSIEKFNDIKEGDIIECFIMEEIKKKTL</sequence>
<feature type="chain" id="PRO_1000093775" description="Translation initiation factor IF-2">
    <location>
        <begin position="1"/>
        <end position="688"/>
    </location>
</feature>
<feature type="domain" description="tr-type G">
    <location>
        <begin position="187"/>
        <end position="354"/>
    </location>
</feature>
<feature type="region of interest" description="Disordered" evidence="3">
    <location>
        <begin position="54"/>
        <end position="95"/>
    </location>
</feature>
<feature type="region of interest" description="G1" evidence="1">
    <location>
        <begin position="196"/>
        <end position="203"/>
    </location>
</feature>
<feature type="region of interest" description="G2" evidence="1">
    <location>
        <begin position="221"/>
        <end position="225"/>
    </location>
</feature>
<feature type="region of interest" description="G3" evidence="1">
    <location>
        <begin position="242"/>
        <end position="245"/>
    </location>
</feature>
<feature type="region of interest" description="G4" evidence="1">
    <location>
        <begin position="296"/>
        <end position="299"/>
    </location>
</feature>
<feature type="region of interest" description="G5" evidence="1">
    <location>
        <begin position="332"/>
        <end position="334"/>
    </location>
</feature>
<feature type="compositionally biased region" description="Basic and acidic residues" evidence="3">
    <location>
        <begin position="86"/>
        <end position="95"/>
    </location>
</feature>
<feature type="binding site" evidence="2">
    <location>
        <begin position="196"/>
        <end position="203"/>
    </location>
    <ligand>
        <name>GTP</name>
        <dbReference type="ChEBI" id="CHEBI:37565"/>
    </ligand>
</feature>
<feature type="binding site" evidence="2">
    <location>
        <begin position="242"/>
        <end position="246"/>
    </location>
    <ligand>
        <name>GTP</name>
        <dbReference type="ChEBI" id="CHEBI:37565"/>
    </ligand>
</feature>
<feature type="binding site" evidence="2">
    <location>
        <begin position="296"/>
        <end position="299"/>
    </location>
    <ligand>
        <name>GTP</name>
        <dbReference type="ChEBI" id="CHEBI:37565"/>
    </ligand>
</feature>
<accession>B1II49</accession>
<dbReference type="EMBL" id="CP000939">
    <property type="protein sequence ID" value="ACA45084.1"/>
    <property type="molecule type" value="Genomic_DNA"/>
</dbReference>
<dbReference type="RefSeq" id="WP_015957782.1">
    <property type="nucleotide sequence ID" value="NC_010516.1"/>
</dbReference>
<dbReference type="SMR" id="B1II49"/>
<dbReference type="KEGG" id="cbb:CLD_2222"/>
<dbReference type="HOGENOM" id="CLU_006301_5_1_9"/>
<dbReference type="Proteomes" id="UP000008541">
    <property type="component" value="Chromosome"/>
</dbReference>
<dbReference type="GO" id="GO:0005829">
    <property type="term" value="C:cytosol"/>
    <property type="evidence" value="ECO:0007669"/>
    <property type="project" value="TreeGrafter"/>
</dbReference>
<dbReference type="GO" id="GO:0005525">
    <property type="term" value="F:GTP binding"/>
    <property type="evidence" value="ECO:0007669"/>
    <property type="project" value="UniProtKB-KW"/>
</dbReference>
<dbReference type="GO" id="GO:0003924">
    <property type="term" value="F:GTPase activity"/>
    <property type="evidence" value="ECO:0007669"/>
    <property type="project" value="UniProtKB-UniRule"/>
</dbReference>
<dbReference type="GO" id="GO:0003743">
    <property type="term" value="F:translation initiation factor activity"/>
    <property type="evidence" value="ECO:0007669"/>
    <property type="project" value="UniProtKB-UniRule"/>
</dbReference>
<dbReference type="CDD" id="cd01887">
    <property type="entry name" value="IF2_eIF5B"/>
    <property type="match status" value="1"/>
</dbReference>
<dbReference type="CDD" id="cd03702">
    <property type="entry name" value="IF2_mtIF2_II"/>
    <property type="match status" value="1"/>
</dbReference>
<dbReference type="CDD" id="cd03692">
    <property type="entry name" value="mtIF2_IVc"/>
    <property type="match status" value="1"/>
</dbReference>
<dbReference type="FunFam" id="2.40.30.10:FF:000007">
    <property type="entry name" value="Translation initiation factor IF-2"/>
    <property type="match status" value="1"/>
</dbReference>
<dbReference type="FunFam" id="2.40.30.10:FF:000008">
    <property type="entry name" value="Translation initiation factor IF-2"/>
    <property type="match status" value="1"/>
</dbReference>
<dbReference type="FunFam" id="3.40.50.10050:FF:000001">
    <property type="entry name" value="Translation initiation factor IF-2"/>
    <property type="match status" value="1"/>
</dbReference>
<dbReference type="FunFam" id="3.40.50.300:FF:000019">
    <property type="entry name" value="Translation initiation factor IF-2"/>
    <property type="match status" value="1"/>
</dbReference>
<dbReference type="Gene3D" id="1.10.10.2480">
    <property type="match status" value="1"/>
</dbReference>
<dbReference type="Gene3D" id="3.40.50.300">
    <property type="entry name" value="P-loop containing nucleotide triphosphate hydrolases"/>
    <property type="match status" value="1"/>
</dbReference>
<dbReference type="Gene3D" id="2.40.30.10">
    <property type="entry name" value="Translation factors"/>
    <property type="match status" value="2"/>
</dbReference>
<dbReference type="Gene3D" id="3.40.50.10050">
    <property type="entry name" value="Translation initiation factor IF- 2, domain 3"/>
    <property type="match status" value="1"/>
</dbReference>
<dbReference type="HAMAP" id="MF_00100_B">
    <property type="entry name" value="IF_2_B"/>
    <property type="match status" value="1"/>
</dbReference>
<dbReference type="InterPro" id="IPR053905">
    <property type="entry name" value="EF-G-like_DII"/>
</dbReference>
<dbReference type="InterPro" id="IPR044145">
    <property type="entry name" value="IF2_II"/>
</dbReference>
<dbReference type="InterPro" id="IPR006847">
    <property type="entry name" value="IF2_N"/>
</dbReference>
<dbReference type="InterPro" id="IPR027417">
    <property type="entry name" value="P-loop_NTPase"/>
</dbReference>
<dbReference type="InterPro" id="IPR005225">
    <property type="entry name" value="Small_GTP-bd"/>
</dbReference>
<dbReference type="InterPro" id="IPR000795">
    <property type="entry name" value="T_Tr_GTP-bd_dom"/>
</dbReference>
<dbReference type="InterPro" id="IPR000178">
    <property type="entry name" value="TF_IF2_bacterial-like"/>
</dbReference>
<dbReference type="InterPro" id="IPR015760">
    <property type="entry name" value="TIF_IF2"/>
</dbReference>
<dbReference type="InterPro" id="IPR023115">
    <property type="entry name" value="TIF_IF2_dom3"/>
</dbReference>
<dbReference type="InterPro" id="IPR036925">
    <property type="entry name" value="TIF_IF2_dom3_sf"/>
</dbReference>
<dbReference type="InterPro" id="IPR009000">
    <property type="entry name" value="Transl_B-barrel_sf"/>
</dbReference>
<dbReference type="NCBIfam" id="TIGR00487">
    <property type="entry name" value="IF-2"/>
    <property type="match status" value="1"/>
</dbReference>
<dbReference type="NCBIfam" id="TIGR00231">
    <property type="entry name" value="small_GTP"/>
    <property type="match status" value="1"/>
</dbReference>
<dbReference type="PANTHER" id="PTHR43381:SF5">
    <property type="entry name" value="TR-TYPE G DOMAIN-CONTAINING PROTEIN"/>
    <property type="match status" value="1"/>
</dbReference>
<dbReference type="PANTHER" id="PTHR43381">
    <property type="entry name" value="TRANSLATION INITIATION FACTOR IF-2-RELATED"/>
    <property type="match status" value="1"/>
</dbReference>
<dbReference type="Pfam" id="PF22042">
    <property type="entry name" value="EF-G_D2"/>
    <property type="match status" value="1"/>
</dbReference>
<dbReference type="Pfam" id="PF00009">
    <property type="entry name" value="GTP_EFTU"/>
    <property type="match status" value="1"/>
</dbReference>
<dbReference type="Pfam" id="PF11987">
    <property type="entry name" value="IF-2"/>
    <property type="match status" value="1"/>
</dbReference>
<dbReference type="Pfam" id="PF04760">
    <property type="entry name" value="IF2_N"/>
    <property type="match status" value="2"/>
</dbReference>
<dbReference type="SUPFAM" id="SSF52156">
    <property type="entry name" value="Initiation factor IF2/eIF5b, domain 3"/>
    <property type="match status" value="1"/>
</dbReference>
<dbReference type="SUPFAM" id="SSF52540">
    <property type="entry name" value="P-loop containing nucleoside triphosphate hydrolases"/>
    <property type="match status" value="1"/>
</dbReference>
<dbReference type="SUPFAM" id="SSF50447">
    <property type="entry name" value="Translation proteins"/>
    <property type="match status" value="2"/>
</dbReference>
<dbReference type="PROSITE" id="PS51722">
    <property type="entry name" value="G_TR_2"/>
    <property type="match status" value="1"/>
</dbReference>
<dbReference type="PROSITE" id="PS01176">
    <property type="entry name" value="IF2"/>
    <property type="match status" value="1"/>
</dbReference>
<gene>
    <name evidence="2" type="primary">infB</name>
    <name type="ordered locus">CLD_2222</name>
</gene>
<organism>
    <name type="scientific">Clostridium botulinum (strain Okra / Type B1)</name>
    <dbReference type="NCBI Taxonomy" id="498213"/>
    <lineage>
        <taxon>Bacteria</taxon>
        <taxon>Bacillati</taxon>
        <taxon>Bacillota</taxon>
        <taxon>Clostridia</taxon>
        <taxon>Eubacteriales</taxon>
        <taxon>Clostridiaceae</taxon>
        <taxon>Clostridium</taxon>
    </lineage>
</organism>
<keyword id="KW-0963">Cytoplasm</keyword>
<keyword id="KW-0342">GTP-binding</keyword>
<keyword id="KW-0396">Initiation factor</keyword>
<keyword id="KW-0547">Nucleotide-binding</keyword>
<keyword id="KW-0648">Protein biosynthesis</keyword>